<reference key="1">
    <citation type="submission" date="2007-03" db="EMBL/GenBank/DDBJ databases">
        <title>Complete sequence of chromosome 1 of Burkholderia vietnamiensis G4.</title>
        <authorList>
            <consortium name="US DOE Joint Genome Institute"/>
            <person name="Copeland A."/>
            <person name="Lucas S."/>
            <person name="Lapidus A."/>
            <person name="Barry K."/>
            <person name="Detter J.C."/>
            <person name="Glavina del Rio T."/>
            <person name="Hammon N."/>
            <person name="Israni S."/>
            <person name="Dalin E."/>
            <person name="Tice H."/>
            <person name="Pitluck S."/>
            <person name="Chain P."/>
            <person name="Malfatti S."/>
            <person name="Shin M."/>
            <person name="Vergez L."/>
            <person name="Schmutz J."/>
            <person name="Larimer F."/>
            <person name="Land M."/>
            <person name="Hauser L."/>
            <person name="Kyrpides N."/>
            <person name="Tiedje J."/>
            <person name="Richardson P."/>
        </authorList>
    </citation>
    <scope>NUCLEOTIDE SEQUENCE [LARGE SCALE GENOMIC DNA]</scope>
    <source>
        <strain>G4 / LMG 22486</strain>
    </source>
</reference>
<organism>
    <name type="scientific">Burkholderia vietnamiensis (strain G4 / LMG 22486)</name>
    <name type="common">Burkholderia cepacia (strain R1808)</name>
    <dbReference type="NCBI Taxonomy" id="269482"/>
    <lineage>
        <taxon>Bacteria</taxon>
        <taxon>Pseudomonadati</taxon>
        <taxon>Pseudomonadota</taxon>
        <taxon>Betaproteobacteria</taxon>
        <taxon>Burkholderiales</taxon>
        <taxon>Burkholderiaceae</taxon>
        <taxon>Burkholderia</taxon>
        <taxon>Burkholderia cepacia complex</taxon>
    </lineage>
</organism>
<dbReference type="EC" id="6.3.3.3" evidence="1"/>
<dbReference type="EMBL" id="CP000614">
    <property type="protein sequence ID" value="ABO56019.1"/>
    <property type="molecule type" value="Genomic_DNA"/>
</dbReference>
<dbReference type="SMR" id="A4JIB6"/>
<dbReference type="KEGG" id="bvi:Bcep1808_3028"/>
<dbReference type="eggNOG" id="COG0132">
    <property type="taxonomic scope" value="Bacteria"/>
</dbReference>
<dbReference type="HOGENOM" id="CLU_072551_0_0_4"/>
<dbReference type="UniPathway" id="UPA00078">
    <property type="reaction ID" value="UER00161"/>
</dbReference>
<dbReference type="Proteomes" id="UP000002287">
    <property type="component" value="Chromosome 1"/>
</dbReference>
<dbReference type="GO" id="GO:0005829">
    <property type="term" value="C:cytosol"/>
    <property type="evidence" value="ECO:0007669"/>
    <property type="project" value="TreeGrafter"/>
</dbReference>
<dbReference type="GO" id="GO:0005524">
    <property type="term" value="F:ATP binding"/>
    <property type="evidence" value="ECO:0007669"/>
    <property type="project" value="UniProtKB-UniRule"/>
</dbReference>
<dbReference type="GO" id="GO:0004141">
    <property type="term" value="F:dethiobiotin synthase activity"/>
    <property type="evidence" value="ECO:0007669"/>
    <property type="project" value="UniProtKB-UniRule"/>
</dbReference>
<dbReference type="GO" id="GO:0000287">
    <property type="term" value="F:magnesium ion binding"/>
    <property type="evidence" value="ECO:0007669"/>
    <property type="project" value="UniProtKB-UniRule"/>
</dbReference>
<dbReference type="GO" id="GO:0009102">
    <property type="term" value="P:biotin biosynthetic process"/>
    <property type="evidence" value="ECO:0007669"/>
    <property type="project" value="UniProtKB-UniRule"/>
</dbReference>
<dbReference type="CDD" id="cd03109">
    <property type="entry name" value="DTBS"/>
    <property type="match status" value="1"/>
</dbReference>
<dbReference type="FunFam" id="3.40.50.300:FF:000292">
    <property type="entry name" value="ATP-dependent dethiobiotin synthetase BioD"/>
    <property type="match status" value="1"/>
</dbReference>
<dbReference type="Gene3D" id="3.40.50.300">
    <property type="entry name" value="P-loop containing nucleotide triphosphate hydrolases"/>
    <property type="match status" value="1"/>
</dbReference>
<dbReference type="HAMAP" id="MF_00336">
    <property type="entry name" value="BioD"/>
    <property type="match status" value="1"/>
</dbReference>
<dbReference type="InterPro" id="IPR004472">
    <property type="entry name" value="DTB_synth_BioD"/>
</dbReference>
<dbReference type="InterPro" id="IPR027417">
    <property type="entry name" value="P-loop_NTPase"/>
</dbReference>
<dbReference type="NCBIfam" id="TIGR00347">
    <property type="entry name" value="bioD"/>
    <property type="match status" value="1"/>
</dbReference>
<dbReference type="PANTHER" id="PTHR43210">
    <property type="entry name" value="DETHIOBIOTIN SYNTHETASE"/>
    <property type="match status" value="1"/>
</dbReference>
<dbReference type="PANTHER" id="PTHR43210:SF5">
    <property type="entry name" value="DETHIOBIOTIN SYNTHETASE"/>
    <property type="match status" value="1"/>
</dbReference>
<dbReference type="Pfam" id="PF13500">
    <property type="entry name" value="AAA_26"/>
    <property type="match status" value="1"/>
</dbReference>
<dbReference type="PIRSF" id="PIRSF006755">
    <property type="entry name" value="DTB_synth"/>
    <property type="match status" value="1"/>
</dbReference>
<dbReference type="SUPFAM" id="SSF52540">
    <property type="entry name" value="P-loop containing nucleoside triphosphate hydrolases"/>
    <property type="match status" value="1"/>
</dbReference>
<gene>
    <name evidence="1" type="primary">bioD</name>
    <name type="ordered locus">Bcep1808_3028</name>
</gene>
<sequence>MSTALSVFVTGTDTEIGKTFVSAAMLHGFARHGLRAAALKPVAAGAYERDGIWRNEDADQLDAAANVALPPELRTPFLLKAPAAPHIVAAHEGVTLDIDTIVASHREALTRANVVVVEGVGGFRVPLNDTQDTADLAVALGLPVVLVVGIRLGCISHALLTADAIRQRGLTLAGWVANHVDPAMSYADENVATIRDWLAREHRAPLLGRVAHLRPAAPESAAAMLDIAALVDTLRRAQH</sequence>
<name>BIOD_BURVG</name>
<protein>
    <recommendedName>
        <fullName evidence="1">ATP-dependent dethiobiotin synthetase BioD</fullName>
        <ecNumber evidence="1">6.3.3.3</ecNumber>
    </recommendedName>
    <alternativeName>
        <fullName evidence="1">DTB synthetase</fullName>
        <shortName evidence="1">DTBS</shortName>
    </alternativeName>
    <alternativeName>
        <fullName evidence="1">Dethiobiotin synthase</fullName>
    </alternativeName>
</protein>
<evidence type="ECO:0000255" key="1">
    <source>
        <dbReference type="HAMAP-Rule" id="MF_00336"/>
    </source>
</evidence>
<feature type="chain" id="PRO_1000019554" description="ATP-dependent dethiobiotin synthetase BioD">
    <location>
        <begin position="1"/>
        <end position="239"/>
    </location>
</feature>
<feature type="active site" evidence="1">
    <location>
        <position position="40"/>
    </location>
</feature>
<feature type="binding site" evidence="1">
    <location>
        <begin position="15"/>
        <end position="20"/>
    </location>
    <ligand>
        <name>ATP</name>
        <dbReference type="ChEBI" id="CHEBI:30616"/>
    </ligand>
</feature>
<feature type="binding site" evidence="1">
    <location>
        <position position="19"/>
    </location>
    <ligand>
        <name>Mg(2+)</name>
        <dbReference type="ChEBI" id="CHEBI:18420"/>
    </ligand>
</feature>
<feature type="binding site" evidence="1">
    <location>
        <position position="57"/>
    </location>
    <ligand>
        <name>ATP</name>
        <dbReference type="ChEBI" id="CHEBI:30616"/>
    </ligand>
</feature>
<feature type="binding site" evidence="1">
    <location>
        <position position="57"/>
    </location>
    <ligand>
        <name>Mg(2+)</name>
        <dbReference type="ChEBI" id="CHEBI:18420"/>
    </ligand>
</feature>
<feature type="binding site" evidence="1">
    <location>
        <begin position="118"/>
        <end position="121"/>
    </location>
    <ligand>
        <name>ATP</name>
        <dbReference type="ChEBI" id="CHEBI:30616"/>
    </ligand>
</feature>
<feature type="binding site" evidence="1">
    <location>
        <position position="118"/>
    </location>
    <ligand>
        <name>Mg(2+)</name>
        <dbReference type="ChEBI" id="CHEBI:18420"/>
    </ligand>
</feature>
<feature type="binding site" evidence="1">
    <location>
        <begin position="178"/>
        <end position="179"/>
    </location>
    <ligand>
        <name>ATP</name>
        <dbReference type="ChEBI" id="CHEBI:30616"/>
    </ligand>
</feature>
<feature type="binding site" evidence="1">
    <location>
        <begin position="211"/>
        <end position="213"/>
    </location>
    <ligand>
        <name>ATP</name>
        <dbReference type="ChEBI" id="CHEBI:30616"/>
    </ligand>
</feature>
<accession>A4JIB6</accession>
<comment type="function">
    <text evidence="1">Catalyzes a mechanistically unusual reaction, the ATP-dependent insertion of CO2 between the N7 and N8 nitrogen atoms of 7,8-diaminopelargonic acid (DAPA, also called 7,8-diammoniononanoate) to form a ureido ring.</text>
</comment>
<comment type="catalytic activity">
    <reaction evidence="1">
        <text>(7R,8S)-7,8-diammoniononanoate + CO2 + ATP = (4R,5S)-dethiobiotin + ADP + phosphate + 3 H(+)</text>
        <dbReference type="Rhea" id="RHEA:15805"/>
        <dbReference type="ChEBI" id="CHEBI:15378"/>
        <dbReference type="ChEBI" id="CHEBI:16526"/>
        <dbReference type="ChEBI" id="CHEBI:30616"/>
        <dbReference type="ChEBI" id="CHEBI:43474"/>
        <dbReference type="ChEBI" id="CHEBI:149469"/>
        <dbReference type="ChEBI" id="CHEBI:149473"/>
        <dbReference type="ChEBI" id="CHEBI:456216"/>
        <dbReference type="EC" id="6.3.3.3"/>
    </reaction>
</comment>
<comment type="cofactor">
    <cofactor evidence="1">
        <name>Mg(2+)</name>
        <dbReference type="ChEBI" id="CHEBI:18420"/>
    </cofactor>
</comment>
<comment type="pathway">
    <text evidence="1">Cofactor biosynthesis; biotin biosynthesis; biotin from 7,8-diaminononanoate: step 1/2.</text>
</comment>
<comment type="subunit">
    <text evidence="1">Homodimer.</text>
</comment>
<comment type="subcellular location">
    <subcellularLocation>
        <location evidence="1">Cytoplasm</location>
    </subcellularLocation>
</comment>
<comment type="similarity">
    <text evidence="1">Belongs to the dethiobiotin synthetase family.</text>
</comment>
<keyword id="KW-0067">ATP-binding</keyword>
<keyword id="KW-0093">Biotin biosynthesis</keyword>
<keyword id="KW-0963">Cytoplasm</keyword>
<keyword id="KW-0436">Ligase</keyword>
<keyword id="KW-0460">Magnesium</keyword>
<keyword id="KW-0479">Metal-binding</keyword>
<keyword id="KW-0547">Nucleotide-binding</keyword>
<proteinExistence type="inferred from homology"/>